<sequence length="143" mass="15988">MERISALGLDVGKKRIGVAGCDGTGLIATGLTTIERQSFPQDVQQLEALVKEREVQLLVIGLPYSMDGTIGFQAKKVQKFAKRLSTALELPIEYIDERLTSVEAETHLKSQKKYSRYNKGLVDRLAATIILQQWLDQRRASLI</sequence>
<protein>
    <recommendedName>
        <fullName evidence="1">Putative pre-16S rRNA nuclease</fullName>
        <ecNumber evidence="1">3.1.-.-</ecNumber>
    </recommendedName>
</protein>
<reference key="1">
    <citation type="journal article" date="2008" name="Proc. Natl. Acad. Sci. U.S.A.">
        <title>The genome of Cyanothece 51142, a unicellular diazotrophic cyanobacterium important in the marine nitrogen cycle.</title>
        <authorList>
            <person name="Welsh E.A."/>
            <person name="Liberton M."/>
            <person name="Stoeckel J."/>
            <person name="Loh T."/>
            <person name="Elvitigala T."/>
            <person name="Wang C."/>
            <person name="Wollam A."/>
            <person name="Fulton R.S."/>
            <person name="Clifton S.W."/>
            <person name="Jacobs J.M."/>
            <person name="Aurora R."/>
            <person name="Ghosh B.K."/>
            <person name="Sherman L.A."/>
            <person name="Smith R.D."/>
            <person name="Wilson R.K."/>
            <person name="Pakrasi H.B."/>
        </authorList>
    </citation>
    <scope>NUCLEOTIDE SEQUENCE [LARGE SCALE GENOMIC DNA]</scope>
    <source>
        <strain>ATCC 51142 / BH68</strain>
    </source>
</reference>
<name>YQGF_CROS5</name>
<keyword id="KW-0963">Cytoplasm</keyword>
<keyword id="KW-0378">Hydrolase</keyword>
<keyword id="KW-0540">Nuclease</keyword>
<keyword id="KW-1185">Reference proteome</keyword>
<keyword id="KW-0690">Ribosome biogenesis</keyword>
<evidence type="ECO:0000255" key="1">
    <source>
        <dbReference type="HAMAP-Rule" id="MF_00651"/>
    </source>
</evidence>
<feature type="chain" id="PRO_1000147477" description="Putative pre-16S rRNA nuclease">
    <location>
        <begin position="1"/>
        <end position="143"/>
    </location>
</feature>
<comment type="function">
    <text evidence="1">Could be a nuclease involved in processing of the 5'-end of pre-16S rRNA.</text>
</comment>
<comment type="subcellular location">
    <subcellularLocation>
        <location evidence="1">Cytoplasm</location>
    </subcellularLocation>
</comment>
<comment type="similarity">
    <text evidence="1">Belongs to the YqgF nuclease family.</text>
</comment>
<gene>
    <name type="ordered locus">cce_1480</name>
</gene>
<proteinExistence type="inferred from homology"/>
<dbReference type="EC" id="3.1.-.-" evidence="1"/>
<dbReference type="EMBL" id="CP000806">
    <property type="protein sequence ID" value="ACB50830.1"/>
    <property type="molecule type" value="Genomic_DNA"/>
</dbReference>
<dbReference type="RefSeq" id="WP_009544288.1">
    <property type="nucleotide sequence ID" value="NC_010546.1"/>
</dbReference>
<dbReference type="SMR" id="B1WX86"/>
<dbReference type="STRING" id="43989.cce_1480"/>
<dbReference type="KEGG" id="cyt:cce_1480"/>
<dbReference type="eggNOG" id="COG0816">
    <property type="taxonomic scope" value="Bacteria"/>
</dbReference>
<dbReference type="HOGENOM" id="CLU_098240_0_0_3"/>
<dbReference type="OrthoDB" id="9796140at2"/>
<dbReference type="Proteomes" id="UP000001203">
    <property type="component" value="Chromosome circular"/>
</dbReference>
<dbReference type="GO" id="GO:0005829">
    <property type="term" value="C:cytosol"/>
    <property type="evidence" value="ECO:0007669"/>
    <property type="project" value="TreeGrafter"/>
</dbReference>
<dbReference type="GO" id="GO:0004518">
    <property type="term" value="F:nuclease activity"/>
    <property type="evidence" value="ECO:0007669"/>
    <property type="project" value="UniProtKB-KW"/>
</dbReference>
<dbReference type="GO" id="GO:0000967">
    <property type="term" value="P:rRNA 5'-end processing"/>
    <property type="evidence" value="ECO:0007669"/>
    <property type="project" value="UniProtKB-UniRule"/>
</dbReference>
<dbReference type="CDD" id="cd16964">
    <property type="entry name" value="YqgF"/>
    <property type="match status" value="1"/>
</dbReference>
<dbReference type="Gene3D" id="3.30.420.140">
    <property type="entry name" value="YqgF/RNase H-like domain"/>
    <property type="match status" value="1"/>
</dbReference>
<dbReference type="HAMAP" id="MF_00651">
    <property type="entry name" value="Nuclease_YqgF"/>
    <property type="match status" value="1"/>
</dbReference>
<dbReference type="InterPro" id="IPR012337">
    <property type="entry name" value="RNaseH-like_sf"/>
</dbReference>
<dbReference type="InterPro" id="IPR005227">
    <property type="entry name" value="YqgF"/>
</dbReference>
<dbReference type="InterPro" id="IPR006641">
    <property type="entry name" value="YqgF/RNaseH-like_dom"/>
</dbReference>
<dbReference type="InterPro" id="IPR037027">
    <property type="entry name" value="YqgF/RNaseH-like_dom_sf"/>
</dbReference>
<dbReference type="NCBIfam" id="TIGR00250">
    <property type="entry name" value="RNAse_H_YqgF"/>
    <property type="match status" value="1"/>
</dbReference>
<dbReference type="PANTHER" id="PTHR33317">
    <property type="entry name" value="POLYNUCLEOTIDYL TRANSFERASE, RIBONUCLEASE H-LIKE SUPERFAMILY PROTEIN"/>
    <property type="match status" value="1"/>
</dbReference>
<dbReference type="PANTHER" id="PTHR33317:SF4">
    <property type="entry name" value="POLYNUCLEOTIDYL TRANSFERASE, RIBONUCLEASE H-LIKE SUPERFAMILY PROTEIN"/>
    <property type="match status" value="1"/>
</dbReference>
<dbReference type="Pfam" id="PF03652">
    <property type="entry name" value="RuvX"/>
    <property type="match status" value="1"/>
</dbReference>
<dbReference type="SMART" id="SM00732">
    <property type="entry name" value="YqgFc"/>
    <property type="match status" value="1"/>
</dbReference>
<dbReference type="SUPFAM" id="SSF53098">
    <property type="entry name" value="Ribonuclease H-like"/>
    <property type="match status" value="1"/>
</dbReference>
<accession>B1WX86</accession>
<organism>
    <name type="scientific">Crocosphaera subtropica (strain ATCC 51142 / BH68)</name>
    <name type="common">Cyanothece sp. (strain ATCC 51142)</name>
    <dbReference type="NCBI Taxonomy" id="43989"/>
    <lineage>
        <taxon>Bacteria</taxon>
        <taxon>Bacillati</taxon>
        <taxon>Cyanobacteriota</taxon>
        <taxon>Cyanophyceae</taxon>
        <taxon>Oscillatoriophycideae</taxon>
        <taxon>Chroococcales</taxon>
        <taxon>Aphanothecaceae</taxon>
        <taxon>Crocosphaera</taxon>
        <taxon>Crocosphaera subtropica</taxon>
    </lineage>
</organism>